<feature type="chain" id="PRO_0000204398" description="Photosystem I reaction center subunit IV">
    <location>
        <begin position="1"/>
        <end position="62"/>
    </location>
</feature>
<name>PSAE_PORUM</name>
<dbReference type="EMBL" id="X60434">
    <property type="protein sequence ID" value="CAA42961.1"/>
    <property type="molecule type" value="Genomic_DNA"/>
</dbReference>
<dbReference type="PIR" id="S20861">
    <property type="entry name" value="F1PR4U"/>
</dbReference>
<dbReference type="RefSeq" id="YP_009413337.1">
    <property type="nucleotide sequence ID" value="NC_035573.1"/>
</dbReference>
<dbReference type="SMR" id="P69404"/>
<dbReference type="GeneID" id="33873608"/>
<dbReference type="OrthoDB" id="2161449at2759"/>
<dbReference type="GO" id="GO:0009535">
    <property type="term" value="C:chloroplast thylakoid membrane"/>
    <property type="evidence" value="ECO:0007669"/>
    <property type="project" value="UniProtKB-SubCell"/>
</dbReference>
<dbReference type="GO" id="GO:0009538">
    <property type="term" value="C:photosystem I reaction center"/>
    <property type="evidence" value="ECO:0007669"/>
    <property type="project" value="InterPro"/>
</dbReference>
<dbReference type="GO" id="GO:0015979">
    <property type="term" value="P:photosynthesis"/>
    <property type="evidence" value="ECO:0007669"/>
    <property type="project" value="UniProtKB-UniRule"/>
</dbReference>
<dbReference type="Gene3D" id="2.30.30.50">
    <property type="match status" value="1"/>
</dbReference>
<dbReference type="HAMAP" id="MF_00613">
    <property type="entry name" value="PSI_PsaE"/>
    <property type="match status" value="1"/>
</dbReference>
<dbReference type="InterPro" id="IPR008990">
    <property type="entry name" value="Elect_transpt_acc-like_dom_sf"/>
</dbReference>
<dbReference type="InterPro" id="IPR003375">
    <property type="entry name" value="PSI_PsaE"/>
</dbReference>
<dbReference type="NCBIfam" id="NF002745">
    <property type="entry name" value="PRK02749.1"/>
    <property type="match status" value="1"/>
</dbReference>
<dbReference type="PANTHER" id="PTHR34549">
    <property type="entry name" value="PHOTOSYSTEM I REACTION CENTER SUBUNIT IV A, CHLOROPLASTIC-RELATED"/>
    <property type="match status" value="1"/>
</dbReference>
<dbReference type="PANTHER" id="PTHR34549:SF2">
    <property type="entry name" value="PHOTOSYSTEM I SUBUNIT IV"/>
    <property type="match status" value="1"/>
</dbReference>
<dbReference type="Pfam" id="PF02427">
    <property type="entry name" value="PSI_PsaE"/>
    <property type="match status" value="1"/>
</dbReference>
<dbReference type="SUPFAM" id="SSF50090">
    <property type="entry name" value="Electron transport accessory proteins"/>
    <property type="match status" value="1"/>
</dbReference>
<sequence length="62" mass="7172">MERGSKVKILRKESYWYQEIGTVAAMDKSGIKYPVLVRFEKVNYNNVNTNSFADNELIDLGK</sequence>
<protein>
    <recommendedName>
        <fullName>Photosystem I reaction center subunit IV</fullName>
        <shortName>PSI-E</shortName>
    </recommendedName>
</protein>
<accession>P69404</accession>
<accession>P29789</accession>
<reference key="1">
    <citation type="journal article" date="1992" name="Plant Mol. Biol.">
        <title>psaE and trnS(CGA) are encoded on the plastid genome of the red alga Porphyra umbilicalis.</title>
        <authorList>
            <person name="Reith M."/>
        </authorList>
    </citation>
    <scope>NUCLEOTIDE SEQUENCE [GENOMIC DNA]</scope>
    <source>
        <strain>Avonport</strain>
    </source>
</reference>
<gene>
    <name type="primary">psaE</name>
</gene>
<comment type="function">
    <text evidence="1">Stabilizes the interaction between PsaC and the PSI core, assists the docking of the ferredoxin to PSI and interacts with ferredoxin-NADP oxidoreductase.</text>
</comment>
<comment type="subcellular location">
    <subcellularLocation>
        <location evidence="1">Plastid</location>
        <location evidence="1">Chloroplast thylakoid membrane</location>
        <topology evidence="1">Peripheral membrane protein</topology>
    </subcellularLocation>
</comment>
<comment type="similarity">
    <text evidence="2">Belongs to the PsaE family.</text>
</comment>
<proteinExistence type="inferred from homology"/>
<organism>
    <name type="scientific">Porphyra umbilicalis</name>
    <name type="common">Purple laver</name>
    <name type="synonym">Red alga</name>
    <dbReference type="NCBI Taxonomy" id="2786"/>
    <lineage>
        <taxon>Eukaryota</taxon>
        <taxon>Rhodophyta</taxon>
        <taxon>Bangiophyceae</taxon>
        <taxon>Bangiales</taxon>
        <taxon>Bangiaceae</taxon>
        <taxon>Porphyra</taxon>
    </lineage>
</organism>
<keyword id="KW-0150">Chloroplast</keyword>
<keyword id="KW-0472">Membrane</keyword>
<keyword id="KW-0602">Photosynthesis</keyword>
<keyword id="KW-0603">Photosystem I</keyword>
<keyword id="KW-0934">Plastid</keyword>
<keyword id="KW-0793">Thylakoid</keyword>
<evidence type="ECO:0000250" key="1"/>
<evidence type="ECO:0000305" key="2"/>
<geneLocation type="chloroplast"/>